<proteinExistence type="evidence at protein level"/>
<sequence>MWFLILFLALSLGGIDAAPPGQSRIVGGYKCEKNSQPWQVAIINEYLCGGVLIDPSWVITAAHCYSNYYHVLLGRNNLFEDEPFAQYRFVNQSFPHPDYKPFLMRNHTRQRGDDYSNDLMLLHLSEPADITDGVKVIDLPTEEPKVGSTCLASGWGSTKPLNWELPDDLQCVNIHLLSNEKCIEAYEQKVTDLMLCAGEMDGRKDTCKGDSGGPLICDGVLQGITSWGNVPCAEPYNPGVYTKLIKFTSWIKEVMKENP</sequence>
<reference key="1">
    <citation type="journal article" date="2004" name="Nature">
        <title>Genome sequence of the Brown Norway rat yields insights into mammalian evolution.</title>
        <authorList>
            <person name="Gibbs R.A."/>
            <person name="Weinstock G.M."/>
            <person name="Metzker M.L."/>
            <person name="Muzny D.M."/>
            <person name="Sodergren E.J."/>
            <person name="Scherer S."/>
            <person name="Scott G."/>
            <person name="Steffen D."/>
            <person name="Worley K.C."/>
            <person name="Burch P.E."/>
            <person name="Okwuonu G."/>
            <person name="Hines S."/>
            <person name="Lewis L."/>
            <person name="Deramo C."/>
            <person name="Delgado O."/>
            <person name="Dugan-Rocha S."/>
            <person name="Miner G."/>
            <person name="Morgan M."/>
            <person name="Hawes A."/>
            <person name="Gill R."/>
            <person name="Holt R.A."/>
            <person name="Adams M.D."/>
            <person name="Amanatides P.G."/>
            <person name="Baden-Tillson H."/>
            <person name="Barnstead M."/>
            <person name="Chin S."/>
            <person name="Evans C.A."/>
            <person name="Ferriera S."/>
            <person name="Fosler C."/>
            <person name="Glodek A."/>
            <person name="Gu Z."/>
            <person name="Jennings D."/>
            <person name="Kraft C.L."/>
            <person name="Nguyen T."/>
            <person name="Pfannkoch C.M."/>
            <person name="Sitter C."/>
            <person name="Sutton G.G."/>
            <person name="Venter J.C."/>
            <person name="Woodage T."/>
            <person name="Smith D."/>
            <person name="Lee H.-M."/>
            <person name="Gustafson E."/>
            <person name="Cahill P."/>
            <person name="Kana A."/>
            <person name="Doucette-Stamm L."/>
            <person name="Weinstock K."/>
            <person name="Fechtel K."/>
            <person name="Weiss R.B."/>
            <person name="Dunn D.M."/>
            <person name="Green E.D."/>
            <person name="Blakesley R.W."/>
            <person name="Bouffard G.G."/>
            <person name="De Jong P.J."/>
            <person name="Osoegawa K."/>
            <person name="Zhu B."/>
            <person name="Marra M."/>
            <person name="Schein J."/>
            <person name="Bosdet I."/>
            <person name="Fjell C."/>
            <person name="Jones S."/>
            <person name="Krzywinski M."/>
            <person name="Mathewson C."/>
            <person name="Siddiqui A."/>
            <person name="Wye N."/>
            <person name="McPherson J."/>
            <person name="Zhao S."/>
            <person name="Fraser C.M."/>
            <person name="Shetty J."/>
            <person name="Shatsman S."/>
            <person name="Geer K."/>
            <person name="Chen Y."/>
            <person name="Abramzon S."/>
            <person name="Nierman W.C."/>
            <person name="Havlak P.H."/>
            <person name="Chen R."/>
            <person name="Durbin K.J."/>
            <person name="Egan A."/>
            <person name="Ren Y."/>
            <person name="Song X.-Z."/>
            <person name="Li B."/>
            <person name="Liu Y."/>
            <person name="Qin X."/>
            <person name="Cawley S."/>
            <person name="Cooney A.J."/>
            <person name="D'Souza L.M."/>
            <person name="Martin K."/>
            <person name="Wu J.Q."/>
            <person name="Gonzalez-Garay M.L."/>
            <person name="Jackson A.R."/>
            <person name="Kalafus K.J."/>
            <person name="McLeod M.P."/>
            <person name="Milosavljevic A."/>
            <person name="Virk D."/>
            <person name="Volkov A."/>
            <person name="Wheeler D.A."/>
            <person name="Zhang Z."/>
            <person name="Bailey J.A."/>
            <person name="Eichler E.E."/>
            <person name="Tuzun E."/>
            <person name="Birney E."/>
            <person name="Mongin E."/>
            <person name="Ureta-Vidal A."/>
            <person name="Woodwark C."/>
            <person name="Zdobnov E."/>
            <person name="Bork P."/>
            <person name="Suyama M."/>
            <person name="Torrents D."/>
            <person name="Alexandersson M."/>
            <person name="Trask B.J."/>
            <person name="Young J.M."/>
            <person name="Huang H."/>
            <person name="Wang H."/>
            <person name="Xing H."/>
            <person name="Daniels S."/>
            <person name="Gietzen D."/>
            <person name="Schmidt J."/>
            <person name="Stevens K."/>
            <person name="Vitt U."/>
            <person name="Wingrove J."/>
            <person name="Camara F."/>
            <person name="Mar Alba M."/>
            <person name="Abril J.F."/>
            <person name="Guigo R."/>
            <person name="Smit A."/>
            <person name="Dubchak I."/>
            <person name="Rubin E.M."/>
            <person name="Couronne O."/>
            <person name="Poliakov A."/>
            <person name="Huebner N."/>
            <person name="Ganten D."/>
            <person name="Goesele C."/>
            <person name="Hummel O."/>
            <person name="Kreitler T."/>
            <person name="Lee Y.-A."/>
            <person name="Monti J."/>
            <person name="Schulz H."/>
            <person name="Zimdahl H."/>
            <person name="Himmelbauer H."/>
            <person name="Lehrach H."/>
            <person name="Jacob H.J."/>
            <person name="Bromberg S."/>
            <person name="Gullings-Handley J."/>
            <person name="Jensen-Seaman M.I."/>
            <person name="Kwitek A.E."/>
            <person name="Lazar J."/>
            <person name="Pasko D."/>
            <person name="Tonellato P.J."/>
            <person name="Twigger S."/>
            <person name="Ponting C.P."/>
            <person name="Duarte J.M."/>
            <person name="Rice S."/>
            <person name="Goodstadt L."/>
            <person name="Beatson S.A."/>
            <person name="Emes R.D."/>
            <person name="Winter E.E."/>
            <person name="Webber C."/>
            <person name="Brandt P."/>
            <person name="Nyakatura G."/>
            <person name="Adetobi M."/>
            <person name="Chiaromonte F."/>
            <person name="Elnitski L."/>
            <person name="Eswara P."/>
            <person name="Hardison R.C."/>
            <person name="Hou M."/>
            <person name="Kolbe D."/>
            <person name="Makova K."/>
            <person name="Miller W."/>
            <person name="Nekrutenko A."/>
            <person name="Riemer C."/>
            <person name="Schwartz S."/>
            <person name="Taylor J."/>
            <person name="Yang S."/>
            <person name="Zhang Y."/>
            <person name="Lindpaintner K."/>
            <person name="Andrews T.D."/>
            <person name="Caccamo M."/>
            <person name="Clamp M."/>
            <person name="Clarke L."/>
            <person name="Curwen V."/>
            <person name="Durbin R.M."/>
            <person name="Eyras E."/>
            <person name="Searle S.M."/>
            <person name="Cooper G.M."/>
            <person name="Batzoglou S."/>
            <person name="Brudno M."/>
            <person name="Sidow A."/>
            <person name="Stone E.A."/>
            <person name="Payseur B.A."/>
            <person name="Bourque G."/>
            <person name="Lopez-Otin C."/>
            <person name="Puente X.S."/>
            <person name="Chakrabarti K."/>
            <person name="Chatterji S."/>
            <person name="Dewey C."/>
            <person name="Pachter L."/>
            <person name="Bray N."/>
            <person name="Yap V.B."/>
            <person name="Caspi A."/>
            <person name="Tesler G."/>
            <person name="Pevzner P.A."/>
            <person name="Haussler D."/>
            <person name="Roskin K.M."/>
            <person name="Baertsch R."/>
            <person name="Clawson H."/>
            <person name="Furey T.S."/>
            <person name="Hinrichs A.S."/>
            <person name="Karolchik D."/>
            <person name="Kent W.J."/>
            <person name="Rosenbloom K.R."/>
            <person name="Trumbower H."/>
            <person name="Weirauch M."/>
            <person name="Cooper D.N."/>
            <person name="Stenson P.D."/>
            <person name="Ma B."/>
            <person name="Brent M."/>
            <person name="Arumugam M."/>
            <person name="Shteynberg D."/>
            <person name="Copley R.R."/>
            <person name="Taylor M.S."/>
            <person name="Riethman H."/>
            <person name="Mudunuri U."/>
            <person name="Peterson J."/>
            <person name="Guyer M."/>
            <person name="Felsenfeld A."/>
            <person name="Old S."/>
            <person name="Mockrin S."/>
            <person name="Collins F.S."/>
        </authorList>
    </citation>
    <scope>NUCLEOTIDE SEQUENCE [LARGE SCALE GENOMIC DNA]</scope>
    <source>
        <strain>Brown Norway</strain>
    </source>
</reference>
<reference key="2">
    <citation type="journal article" date="1992" name="Biochemistry">
        <title>Molecular cloning and characterization of rKlk10, a cDNA encoding T-kininogenase from rat submandibular gland and kidney.</title>
        <authorList>
            <person name="Ma J.-X."/>
            <person name="Chao J."/>
            <person name="Chao L."/>
        </authorList>
    </citation>
    <scope>NUCLEOTIDE SEQUENCE [MRNA] OF 16-259</scope>
    <scope>PARTIAL PROTEIN SEQUENCE</scope>
    <scope>TISSUE SPECIFICITY</scope>
    <source>
        <tissue>Kidney</tissue>
        <tissue>Submandibular gland</tissue>
    </source>
</reference>
<reference key="3">
    <citation type="journal article" date="1987" name="J. Biochem.">
        <title>Characterization of serine proteinases isolated from rat submaxillary gland: with special reference to the degradation of rat kininogens by these enzymes.</title>
        <authorList>
            <person name="Kato H."/>
            <person name="Nakanishi E."/>
            <person name="Enjyoji K."/>
            <person name="Hayashi I."/>
            <person name="Oh-Ishi S."/>
            <person name="Iwanaga S."/>
        </authorList>
    </citation>
    <scope>PROTEIN SEQUENCE OF 25-47 AND 112-132</scope>
    <source>
        <tissue>Submandibular gland</tissue>
    </source>
</reference>
<reference key="4">
    <citation type="journal article" date="1990" name="J. Biol. Chem.">
        <title>Purification and characterization of a kallikrein-like T-kininogenase.</title>
        <authorList>
            <person name="Xiong W."/>
            <person name="Chen L.-M."/>
            <person name="Chao J."/>
        </authorList>
    </citation>
    <scope>PROTEIN SEQUENCE OF 25-47 AND 112-148</scope>
    <source>
        <tissue>Submandibular gland</tissue>
    </source>
</reference>
<reference key="5">
    <citation type="journal article" date="1991" name="Eur. J. Biochem.">
        <title>Microheterogeneity of rat submaxillary gland kallikrein k10, a member of the kallikrein family.</title>
        <authorList>
            <person name="Gutman N."/>
            <person name="Elmoujahed A."/>
            <person name="Brillard M."/>
            <person name="du Sorbier B."/>
            <person name="Gauthier F."/>
        </authorList>
    </citation>
    <scope>PROTEIN SEQUENCE OF 25-47; 110-139 AND 194-247</scope>
    <source>
        <tissue>Submandibular gland</tissue>
    </source>
</reference>
<evidence type="ECO:0000255" key="1"/>
<evidence type="ECO:0000255" key="2">
    <source>
        <dbReference type="PROSITE-ProRule" id="PRU00274"/>
    </source>
</evidence>
<evidence type="ECO:0000269" key="3">
    <source>
    </source>
</evidence>
<evidence type="ECO:0000305" key="4"/>
<evidence type="ECO:0000305" key="5">
    <source>
    </source>
</evidence>
<evidence type="ECO:0000305" key="6">
    <source>
    </source>
</evidence>
<evidence type="ECO:0000305" key="7">
    <source>
    </source>
</evidence>
<organism>
    <name type="scientific">Rattus norvegicus</name>
    <name type="common">Rat</name>
    <dbReference type="NCBI Taxonomy" id="10116"/>
    <lineage>
        <taxon>Eukaryota</taxon>
        <taxon>Metazoa</taxon>
        <taxon>Chordata</taxon>
        <taxon>Craniata</taxon>
        <taxon>Vertebrata</taxon>
        <taxon>Euteleostomi</taxon>
        <taxon>Mammalia</taxon>
        <taxon>Eutheria</taxon>
        <taxon>Euarchontoglires</taxon>
        <taxon>Glires</taxon>
        <taxon>Rodentia</taxon>
        <taxon>Myomorpha</taxon>
        <taxon>Muroidea</taxon>
        <taxon>Muridae</taxon>
        <taxon>Murinae</taxon>
        <taxon>Rattus</taxon>
    </lineage>
</organism>
<protein>
    <recommendedName>
        <fullName>Glandular kallikrein-10</fullName>
        <shortName>K10</shortName>
        <shortName>rGK-10</shortName>
        <ecNumber>3.4.21.35</ecNumber>
    </recommendedName>
    <alternativeName>
        <fullName>Endopeptidase K</fullName>
    </alternativeName>
    <alternativeName>
        <fullName>Proteinase B</fullName>
    </alternativeName>
    <alternativeName>
        <fullName>T-kininogenase</fullName>
    </alternativeName>
    <alternativeName>
        <fullName>Tissue kallikrein</fullName>
    </alternativeName>
    <component>
        <recommendedName>
            <fullName>T-kininogenase light chain</fullName>
        </recommendedName>
    </component>
    <component>
        <recommendedName>
            <fullName>T-kininogenase heavy chain</fullName>
        </recommendedName>
    </component>
</protein>
<accession>P36375</accession>
<comment type="function">
    <text>Glandular kallikreins cleave Met-Lys and Arg-Ser bonds in kininogen to release Lys-bradykinin. This protein may be involved in the regulation of renal function.</text>
</comment>
<comment type="catalytic activity">
    <reaction>
        <text>Preferential cleavage of Arg-|-Xaa bonds in small molecule substrates. Highly selective action to release kallidin (lysyl-bradykinin) from kininogen involves hydrolysis of Met-|-Xaa or Leu-|-Xaa.</text>
        <dbReference type="EC" id="3.4.21.35"/>
    </reaction>
</comment>
<comment type="subunit">
    <text>Heterodimer of a light chain and heavy chain linked by a disulfide bond.</text>
</comment>
<comment type="tissue specificity">
    <text evidence="3">Kidney and submandibular gland, where it is found in the granular convoluted tubule and striated duct cells. It is likely that the enzyme is mainly synthesized in the granular convoluted tubules and then transferred to other tissues by release into the vasculature or interstitial space.</text>
</comment>
<comment type="PTM">
    <text>Probably N- and O-glycosylated.</text>
</comment>
<comment type="similarity">
    <text evidence="2">Belongs to the peptidase S1 family. Kallikrein subfamily.</text>
</comment>
<gene>
    <name type="primary">Klk10</name>
    <name type="synonym">Klk-10</name>
</gene>
<name>KLK10_RAT</name>
<keyword id="KW-0903">Direct protein sequencing</keyword>
<keyword id="KW-1015">Disulfide bond</keyword>
<keyword id="KW-0325">Glycoprotein</keyword>
<keyword id="KW-0378">Hydrolase</keyword>
<keyword id="KW-0645">Protease</keyword>
<keyword id="KW-1185">Reference proteome</keyword>
<keyword id="KW-0720">Serine protease</keyword>
<keyword id="KW-0732">Signal</keyword>
<keyword id="KW-0865">Zymogen</keyword>
<feature type="signal peptide" evidence="4">
    <location>
        <begin position="1"/>
        <end position="18"/>
    </location>
</feature>
<feature type="propeptide" id="PRO_0000028013" description="Activation peptide" evidence="5 6 7">
    <location>
        <begin position="19"/>
        <end position="24"/>
    </location>
</feature>
<feature type="chain" id="PRO_0000028014" description="Glandular kallikrein-10">
    <location>
        <begin position="25"/>
        <end position="259"/>
    </location>
</feature>
<feature type="chain" id="PRO_0000028015" description="T-kininogenase light chain">
    <location>
        <begin position="25"/>
        <end position="111"/>
    </location>
</feature>
<feature type="chain" id="PRO_0000028016" description="T-kininogenase heavy chain">
    <location>
        <begin position="112"/>
        <end position="259"/>
    </location>
</feature>
<feature type="domain" description="Peptidase S1" evidence="2">
    <location>
        <begin position="25"/>
        <end position="256"/>
    </location>
</feature>
<feature type="active site" description="Charge relay system">
    <location>
        <position position="63"/>
    </location>
</feature>
<feature type="active site" description="Charge relay system">
    <location>
        <position position="118"/>
    </location>
</feature>
<feature type="active site" description="Charge relay system">
    <location>
        <position position="211"/>
    </location>
</feature>
<feature type="glycosylation site" description="N-linked (GlcNAc...) asparagine" evidence="1">
    <location>
        <position position="91"/>
    </location>
</feature>
<feature type="glycosylation site" description="N-linked (GlcNAc...) asparagine" evidence="1">
    <location>
        <position position="106"/>
    </location>
</feature>
<feature type="disulfide bond" evidence="2">
    <location>
        <begin position="31"/>
        <end position="171"/>
    </location>
</feature>
<feature type="disulfide bond" evidence="2">
    <location>
        <begin position="48"/>
        <end position="64"/>
    </location>
</feature>
<feature type="disulfide bond" evidence="2">
    <location>
        <begin position="150"/>
        <end position="217"/>
    </location>
</feature>
<feature type="disulfide bond" evidence="2">
    <location>
        <begin position="182"/>
        <end position="196"/>
    </location>
</feature>
<feature type="disulfide bond" evidence="2">
    <location>
        <begin position="207"/>
        <end position="232"/>
    </location>
</feature>
<feature type="sequence conflict" description="In Ref. 4; AA sequence." evidence="4" ref="4">
    <original>N</original>
    <variation>IET</variation>
    <location>
        <position position="44"/>
    </location>
</feature>
<feature type="sequence conflict" description="In Ref. 3; AA sequence." evidence="4" ref="3">
    <original>IT</original>
    <variation>DS</variation>
    <location>
        <begin position="130"/>
        <end position="131"/>
    </location>
</feature>
<feature type="sequence conflict" description="In Ref. 4; AA sequence." evidence="4" ref="4">
    <original>E</original>
    <variation>G</variation>
    <location>
        <position position="143"/>
    </location>
</feature>
<feature type="sequence conflict" description="In Ref. 4; AA sequence." evidence="4" ref="4">
    <original>S</original>
    <variation>G</variation>
    <location>
        <position position="148"/>
    </location>
</feature>
<dbReference type="EC" id="3.4.21.35"/>
<dbReference type="EMBL" id="AABR03000574">
    <property type="status" value="NOT_ANNOTATED_CDS"/>
    <property type="molecule type" value="Genomic_DNA"/>
</dbReference>
<dbReference type="EMBL" id="S48142">
    <property type="protein sequence ID" value="AAB24071.1"/>
    <property type="molecule type" value="mRNA"/>
</dbReference>
<dbReference type="PIR" id="A44284">
    <property type="entry name" value="A44284"/>
</dbReference>
<dbReference type="PIR" id="B35545">
    <property type="entry name" value="B35545"/>
</dbReference>
<dbReference type="RefSeq" id="NP_001128645.1">
    <property type="nucleotide sequence ID" value="NM_001135173.1"/>
</dbReference>
<dbReference type="RefSeq" id="XP_003748896.1">
    <property type="nucleotide sequence ID" value="XM_003748848.3"/>
</dbReference>
<dbReference type="SMR" id="P36375"/>
<dbReference type="FunCoup" id="P36375">
    <property type="interactions" value="49"/>
</dbReference>
<dbReference type="STRING" id="10116.ENSRNOP00000048581"/>
<dbReference type="MEROPS" id="S01.165"/>
<dbReference type="GlyCosmos" id="P36375">
    <property type="glycosylation" value="2 sites, No reported glycans"/>
</dbReference>
<dbReference type="GlyGen" id="P36375">
    <property type="glycosylation" value="2 sites"/>
</dbReference>
<dbReference type="iPTMnet" id="P36375"/>
<dbReference type="PhosphoSitePlus" id="P36375"/>
<dbReference type="PaxDb" id="10116-ENSRNOP00000048581"/>
<dbReference type="Ensembl" id="ENSRNOT00000045756.5">
    <property type="protein sequence ID" value="ENSRNOP00000050040.4"/>
    <property type="gene ID" value="ENSRNOG00000046297.2"/>
</dbReference>
<dbReference type="GeneID" id="292858"/>
<dbReference type="KEGG" id="rno:292858"/>
<dbReference type="UCSC" id="RGD:1303242">
    <property type="organism name" value="rat"/>
</dbReference>
<dbReference type="AGR" id="RGD:1561403"/>
<dbReference type="CTD" id="292858"/>
<dbReference type="RGD" id="1303242">
    <property type="gene designation" value="Klk10"/>
</dbReference>
<dbReference type="eggNOG" id="KOG3627">
    <property type="taxonomic scope" value="Eukaryota"/>
</dbReference>
<dbReference type="GeneTree" id="ENSGT01020000230389"/>
<dbReference type="HOGENOM" id="CLU_006842_1_1_1"/>
<dbReference type="InParanoid" id="P36375"/>
<dbReference type="OMA" id="LAFVEWI"/>
<dbReference type="OrthoDB" id="10061449at2759"/>
<dbReference type="PhylomeDB" id="P36375"/>
<dbReference type="TreeFam" id="TF331065"/>
<dbReference type="Reactome" id="R-RNO-1592389">
    <property type="pathway name" value="Activation of Matrix Metalloproteinases"/>
</dbReference>
<dbReference type="Reactome" id="R-RNO-381426">
    <property type="pathway name" value="Regulation of Insulin-like Growth Factor (IGF) transport and uptake by Insulin-like Growth Factor Binding Proteins (IGFBPs)"/>
</dbReference>
<dbReference type="PRO" id="PR:P36375"/>
<dbReference type="Proteomes" id="UP000002494">
    <property type="component" value="Chromosome 1"/>
</dbReference>
<dbReference type="Bgee" id="ENSRNOG00000046297">
    <property type="expression patterns" value="Expressed in kidney and 3 other cell types or tissues"/>
</dbReference>
<dbReference type="GO" id="GO:0005615">
    <property type="term" value="C:extracellular space"/>
    <property type="evidence" value="ECO:0000318"/>
    <property type="project" value="GO_Central"/>
</dbReference>
<dbReference type="GO" id="GO:0030141">
    <property type="term" value="C:secretory granule"/>
    <property type="evidence" value="ECO:0000318"/>
    <property type="project" value="GO_Central"/>
</dbReference>
<dbReference type="GO" id="GO:0004252">
    <property type="term" value="F:serine-type endopeptidase activity"/>
    <property type="evidence" value="ECO:0000318"/>
    <property type="project" value="GO_Central"/>
</dbReference>
<dbReference type="GO" id="GO:0003073">
    <property type="term" value="P:regulation of systemic arterial blood pressure"/>
    <property type="evidence" value="ECO:0000318"/>
    <property type="project" value="GO_Central"/>
</dbReference>
<dbReference type="GO" id="GO:0031638">
    <property type="term" value="P:zymogen activation"/>
    <property type="evidence" value="ECO:0000318"/>
    <property type="project" value="GO_Central"/>
</dbReference>
<dbReference type="CDD" id="cd00190">
    <property type="entry name" value="Tryp_SPc"/>
    <property type="match status" value="1"/>
</dbReference>
<dbReference type="FunFam" id="2.40.10.10:FF:000032">
    <property type="entry name" value="Kallikrein 1-related peptidase C9"/>
    <property type="match status" value="1"/>
</dbReference>
<dbReference type="FunFam" id="2.40.10.10:FF:000042">
    <property type="entry name" value="Kallikrein 1-related peptidase C9"/>
    <property type="match status" value="1"/>
</dbReference>
<dbReference type="Gene3D" id="2.40.10.10">
    <property type="entry name" value="Trypsin-like serine proteases"/>
    <property type="match status" value="2"/>
</dbReference>
<dbReference type="InterPro" id="IPR009003">
    <property type="entry name" value="Peptidase_S1_PA"/>
</dbReference>
<dbReference type="InterPro" id="IPR043504">
    <property type="entry name" value="Peptidase_S1_PA_chymotrypsin"/>
</dbReference>
<dbReference type="InterPro" id="IPR001314">
    <property type="entry name" value="Peptidase_S1A"/>
</dbReference>
<dbReference type="InterPro" id="IPR001254">
    <property type="entry name" value="Trypsin_dom"/>
</dbReference>
<dbReference type="InterPro" id="IPR018114">
    <property type="entry name" value="TRYPSIN_HIS"/>
</dbReference>
<dbReference type="InterPro" id="IPR033116">
    <property type="entry name" value="TRYPSIN_SER"/>
</dbReference>
<dbReference type="PANTHER" id="PTHR24271:SF47">
    <property type="entry name" value="KALLIKREIN-1"/>
    <property type="match status" value="1"/>
</dbReference>
<dbReference type="PANTHER" id="PTHR24271">
    <property type="entry name" value="KALLIKREIN-RELATED"/>
    <property type="match status" value="1"/>
</dbReference>
<dbReference type="Pfam" id="PF00089">
    <property type="entry name" value="Trypsin"/>
    <property type="match status" value="1"/>
</dbReference>
<dbReference type="PRINTS" id="PR00722">
    <property type="entry name" value="CHYMOTRYPSIN"/>
</dbReference>
<dbReference type="SMART" id="SM00020">
    <property type="entry name" value="Tryp_SPc"/>
    <property type="match status" value="1"/>
</dbReference>
<dbReference type="SUPFAM" id="SSF50494">
    <property type="entry name" value="Trypsin-like serine proteases"/>
    <property type="match status" value="1"/>
</dbReference>
<dbReference type="PROSITE" id="PS50240">
    <property type="entry name" value="TRYPSIN_DOM"/>
    <property type="match status" value="1"/>
</dbReference>
<dbReference type="PROSITE" id="PS00134">
    <property type="entry name" value="TRYPSIN_HIS"/>
    <property type="match status" value="1"/>
</dbReference>
<dbReference type="PROSITE" id="PS00135">
    <property type="entry name" value="TRYPSIN_SER"/>
    <property type="match status" value="1"/>
</dbReference>